<accession>Q9VK45</accession>
<sequence length="2470" mass="281033">MSTTSVVQQFVNGLKSRNRNVQNKATQDLLFYVKTELREMSQEELAQFFDEFDHHIFTMVNATDINEKKGGALAMKCLINCEGSLTARKGISPYLNRLRDLLLINDVSVMEIAARSLVKLANMPTSKGADSFDFDIKKAFEVLRGERQEYRRHSAVFILRELAIALPTYFYQHILTFFEVIFNAIFDPKPAIRESAGEALRAALIVTAQRESTKQSSEPQWYRICYDEANGSFNADLGSSKDQKGVTRDDRIHGGLVVFNELFRCANATWERRYTSLKTLFPKTQHNKFLEASSSSSMGSQLNTLVPRLKVPFIDKLGSTQTHLGEGEHHKGVAKFASHNVLESAYAQEILQEHYTSICDNVLEQRTSKSPYVQQALLQILPRLAAFNRAVFVEKYLQTCVSHLMQILRGKEKDRTVAYITIGYMAVAVQSAIEVHLSSIMTSVKVALPSKDLTSKRKVPVDPAVFACITLLAHAVKSEIADDVKDILEQMFYTGLSPALTVCLRELSENVPQLKSAITEGLIGILSQVLMNKAAILPYTALPTIAIDGSLMQNGDGATTVLALKTLGTFNFEEQNMLDFVQRCADYFIVHEQQEIRLEAVQTCTRLLKLAVQSSESMENSKTLSDTVSHVIERLLMVAITDMDCNVRIRILRSLDETFDGKLAQPESLNSLFITLHDEIFEIRELAMVTIGRLSSINPAYVMPKLRTTMIELITDLKYSGMSRNKEQSAKMLDHLVISTPRLISSYMNPILKALVPKLHEPESNPGVILNVLRTIGDLAEVNGGSDEMELWADDLLSILLEMLGDAGSPDKRGVALWTLGQLISATGRVVTPYHKYPVLIDILINFLKTEQRRSIRRETIRVLGLLGAMDPYKHKMNKGLIDSQKDNVLIAYSDGKVDESQDISTAELLVNMGNALDEYYPAVAIAALMRILRDPTLSTRHTSVVQAVTFIFQSLGIKCVPYLAQVLPNLLDNVRTADNNLREFLFQQLAILVAFVKLHIISYMGDIFKLIKEFWTINTPLQNTLINLIEQIAVALGCEFRDYLAELIPQILRVLQHDNSKDRMVTRRLLQALQKFGSTLGYYLPLILPPIVKLFDSPYVPQQVSMVALETINNLACQLDFTDFSSRIIHPLVRVLDAEPELRDQAMTTLRSLAKQLGKKYLVFVPMVQRTLNKHRIVDPEYEELLSKIKSCSTLADSYGAGESELRPSRFKNNEPFVTDRNSNNKNLQVTTNELRTAWQVTRRVSKDDWVEWLKRLSIGLLKESPSHALRACRSLAQEYDTLLRDLFNAAFISCWTELSPDLKNELTQSLIQALQVTDMPEITQTILNLAEFMEHCDRDPIPIETKLLGTRAMACRAYAKALRYKEEEFLLREDSQVFESLILINNKLQQREAAEGLLTRYRNAANELNVQGRWYEKLHNWDEALEHYERNLKTDSSDLEARLGHMRCLEALGDWSELSNVTKHEWENFGTEAKSRAGPLAAVAAWGLQDWEAMREYVRCIPEDTQDGSYYRAVLAVHHDDFETAQRLIDETRDLLDTELTSMAGESYERAYGAMVCVQMLAELEEVIQYKLIPERREPLKTMWWKRLQGGQRLVEDWRRIIQVHSLVVKPHEDIHTWLKYASLCRKSGSLHLSHKTLVMLLGTDPKLNPNQPLPCNQPQVTYAYTKYMAANNQLQEAYEQLTHFVSTYSQELSCLPPEALKQQDQRLMARCYLRMATWQNKLQDSIRPDAIQGALECFEKATSYDPNWYKAWHLWAYMNFKVVQAQKSALDKQQPPGASMGMTMGSGLDSDLMIIQRYAVPAVQGFFRSISLIKGNSLQDTLRLLTLWFDYGNHAEVYEALLSGMKLIEINTWLQVIPQLIARIDTHRQLVGQLIHQLLMDIGKNHPQALVYPLTVASKSASLARRNAAFKILDSMRKHSPTLVEQAVMCSEELIRVAILWHEQWHEGLEEASRLYFGDRNVKGMFEILEPLHAMLERGPQTLKETSFSQAYGRELTEAYEWSQRYKTSAVVMDLDRAWDIYYHVFQKISRQLPQLTSLELPYVSPKLMTCKDLELAVPGSYNPGQELIRISIIKTNLQVITSKQRPRKLCIRGSNGKDYMYLLKGHEDLRQDERVMQLFSLVNTLLLDDPDTFRRNLAIQRYAVIPLSTNSGLIGWVPHCDTLHTLIRDYRDKKKVPLNQEHRTMLNFAPDYDHLTLMQKVEVFEHALGQTQGDDLAKLLWLKSPSSELWFERRNNYTRSLAVMSMVGYILGLGDRHPSNLMLDRMSGKILHIDFGDCFEVAMTREKFPEKIPFRLTRMLIKAMEVTGIEGTYRRTCESVMLVLRRNKDSLMAVLEAFVYDPLLNWRLLDVDKKGNDAVAGAGAPGGRGGSGMQDSLSNSVEDSLPMAKSKPYDPTLQQGGLHNNVADETNSKASQVIKRVKCKLTGTDFQTEKSVNEQSQVELLIQQATNNENLCQCYIGWCPFW</sequence>
<comment type="function">
    <text evidence="8 9 10 11 13 14 15 16">Promotes cell and tissue growth, maintains tissue homeostatis and controls responses to environmental stress and aging (PubMed:11069885, PubMed:11069888, PubMed:19211682, PubMed:19225150). Regulates growth during animal development by coupling growth factor signaling to nutrient availability (PubMed:11069888). Central regulators of autophagy (PubMed:18604198, PubMed:19225150). May be involved in atg1 phosphorylation (PubMed:19225150). May also be involved, directly or indirectly, in the control of neuronal function (PubMed:15454083). Phosphorylates S6K/p70S6K, in vitro (PubMed:11069888). May regulate the activity of S6K (PubMed:11069885). Overexpression inhibits growth and reduces cell size (PubMed:14505573). Affects the timing of neuronal cell differentiation (PubMed:15454083). Hyperactivation of the signaling leads to accelerated differentiation, whereas inhibition of the signaling retards differentiation (PubMed:15454083). Thus, in addition to controlling growth of the cell in which it resides, it can also influence growth of distant cells and organs during development via a humoral mechanism (PubMed:14505573). As part of the TORC1 complex regulates energy homeostasis and promotes certain aspects of larval growth by negatively regulating REPTOR (PubMed:25920570). REPTOR functions downstream of TORC1 to regulate the expression of stress response genes in response to TORC1 inhibition resulting from nutrient deprivation (PubMed:25920570). When TORC1 activity is high it phosphorylates REPTOR which inhibits its recruitment into the nucleus and antagonizes their function (PubMed:25920570). This function is essential under normal feeding conditions to promote TORC1-dependent growth during larval development and, in adults and larvae to prevent the REPTOR-dependent expression of nutrient stress response genes (PubMed:25920570). In short, during development, it primarily controls growth, whereas in the adult, where there is relatively little growth, it controls aging and other aspects of nutrient-related physiology (PubMed:11069885, PubMed:11069888, PubMed:19211682, PubMed:19225150). Rag GTPases act as activators of TORC1 in response to amino acid signals (PubMed:18604198).</text>
</comment>
<comment type="catalytic activity">
    <reaction>
        <text>L-seryl-[protein] + ATP = O-phospho-L-seryl-[protein] + ADP + H(+)</text>
        <dbReference type="Rhea" id="RHEA:17989"/>
        <dbReference type="Rhea" id="RHEA-COMP:9863"/>
        <dbReference type="Rhea" id="RHEA-COMP:11604"/>
        <dbReference type="ChEBI" id="CHEBI:15378"/>
        <dbReference type="ChEBI" id="CHEBI:29999"/>
        <dbReference type="ChEBI" id="CHEBI:30616"/>
        <dbReference type="ChEBI" id="CHEBI:83421"/>
        <dbReference type="ChEBI" id="CHEBI:456216"/>
        <dbReference type="EC" id="2.7.11.1"/>
    </reaction>
</comment>
<comment type="catalytic activity">
    <reaction>
        <text>L-threonyl-[protein] + ATP = O-phospho-L-threonyl-[protein] + ADP + H(+)</text>
        <dbReference type="Rhea" id="RHEA:46608"/>
        <dbReference type="Rhea" id="RHEA-COMP:11060"/>
        <dbReference type="Rhea" id="RHEA-COMP:11605"/>
        <dbReference type="ChEBI" id="CHEBI:15378"/>
        <dbReference type="ChEBI" id="CHEBI:30013"/>
        <dbReference type="ChEBI" id="CHEBI:30616"/>
        <dbReference type="ChEBI" id="CHEBI:61977"/>
        <dbReference type="ChEBI" id="CHEBI:456216"/>
        <dbReference type="EC" id="2.7.11.1"/>
    </reaction>
</comment>
<comment type="subunit">
    <text evidence="1 12">May be part of a minimal complex, TORC1, consisting of mTor, raptor and lst8. May be part of a minimal complex, TORC2, consisting of mTor, rictor and lst8 (By similarity). Self-associates; assembles into homomultimeric complexes. Component of a multiprotein complex.</text>
</comment>
<comment type="induction">
    <text evidence="14">By PI3K/Akt signaling, or by nutrients such as amino acids, and by high cellular energy levels.</text>
</comment>
<comment type="disruption phenotype">
    <text evidence="8 9">Not lethal. Displays phenotypes characteristic of amino acid deprivation, including reduced nucleolar size, lipid vesicle aggregation in the larval fat body, and a cell type-specific pattern of cell cycle arrest that can be bypassed by overexpression of the S-phase regulator cyclin E. Reach only the size of second instar larvae, at which point they undergo cell cycle arrest.</text>
</comment>
<comment type="similarity">
    <text evidence="18">Belongs to the PI3/PI4-kinase family.</text>
</comment>
<protein>
    <recommendedName>
        <fullName evidence="18">Serine/threonine-protein kinase mTor</fullName>
        <ecNumber evidence="8">2.7.11.1</ecNumber>
    </recommendedName>
    <alternativeName>
        <fullName evidence="17">Target of rapamycin</fullName>
    </alternativeName>
    <alternativeName>
        <fullName evidence="17">mechanistic Target of rapamycin</fullName>
    </alternativeName>
</protein>
<feature type="chain" id="PRO_0000377458" description="Serine/threonine-protein kinase mTor">
    <location>
        <begin position="1"/>
        <end position="2470"/>
    </location>
</feature>
<feature type="repeat" description="HEAT 1" evidence="2">
    <location>
        <begin position="172"/>
        <end position="209"/>
    </location>
</feature>
<feature type="repeat" description="HEAT 2" evidence="2">
    <location>
        <begin position="746"/>
        <end position="785"/>
    </location>
</feature>
<feature type="repeat" description="HEAT 3" evidence="2">
    <location>
        <begin position="791"/>
        <end position="829"/>
    </location>
</feature>
<feature type="repeat" description="HEAT 4" evidence="2">
    <location>
        <begin position="835"/>
        <end position="873"/>
    </location>
</feature>
<feature type="repeat" description="HEAT 5" evidence="2">
    <location>
        <begin position="962"/>
        <end position="999"/>
    </location>
</feature>
<feature type="repeat" description="HEAT 6" evidence="2">
    <location>
        <begin position="1043"/>
        <end position="1080"/>
    </location>
</feature>
<feature type="repeat" description="HEAT 7" evidence="2">
    <location>
        <begin position="1083"/>
        <end position="1122"/>
    </location>
</feature>
<feature type="repeat" description="HEAT 8" evidence="2">
    <location>
        <begin position="1124"/>
        <end position="1160"/>
    </location>
</feature>
<feature type="domain" description="FAT" evidence="5">
    <location>
        <begin position="1349"/>
        <end position="1903"/>
    </location>
</feature>
<feature type="repeat" description="TPR 1" evidence="2 4">
    <location>
        <begin position="1407"/>
        <end position="1440"/>
    </location>
</feature>
<feature type="repeat" description="TPR 2" evidence="4">
    <location>
        <begin position="1718"/>
        <end position="1751"/>
    </location>
</feature>
<feature type="repeat" description="HEAT 9" evidence="2">
    <location>
        <begin position="1854"/>
        <end position="1891"/>
    </location>
</feature>
<feature type="domain" description="PI3K/PI4K catalytic" evidence="3">
    <location>
        <begin position="2077"/>
        <end position="2389"/>
    </location>
</feature>
<feature type="domain" description="FATC" evidence="5 6">
    <location>
        <begin position="2438"/>
        <end position="2470"/>
    </location>
</feature>
<feature type="region of interest" description="G-loop" evidence="3">
    <location>
        <begin position="2083"/>
        <end position="2089"/>
    </location>
</feature>
<feature type="region of interest" description="Catalytic loop" evidence="3">
    <location>
        <begin position="2256"/>
        <end position="2264"/>
    </location>
</feature>
<feature type="region of interest" description="Activation loop" evidence="3">
    <location>
        <begin position="2276"/>
        <end position="2301"/>
    </location>
</feature>
<feature type="region of interest" description="Disordered" evidence="7">
    <location>
        <begin position="2364"/>
        <end position="2389"/>
    </location>
</feature>
<feature type="compositionally biased region" description="Gly residues" evidence="7">
    <location>
        <begin position="2367"/>
        <end position="2376"/>
    </location>
</feature>
<feature type="compositionally biased region" description="Polar residues" evidence="7">
    <location>
        <begin position="2377"/>
        <end position="2386"/>
    </location>
</feature>
<feature type="mutagenesis site" description="Rapamycin resistance and loss of activity." evidence="8">
    <original>S</original>
    <variation>T</variation>
    <location>
        <position position="1956"/>
    </location>
</feature>
<dbReference type="EC" id="2.7.11.1" evidence="8"/>
<dbReference type="EMBL" id="AE014134">
    <property type="protein sequence ID" value="AAF53237.1"/>
    <property type="molecule type" value="Genomic_DNA"/>
</dbReference>
<dbReference type="RefSeq" id="NP_524891.1">
    <property type="nucleotide sequence ID" value="NM_080152.3"/>
</dbReference>
<dbReference type="SMR" id="Q9VK45"/>
<dbReference type="BioGRID" id="70789">
    <property type="interactions" value="56"/>
</dbReference>
<dbReference type="ComplexPortal" id="CPX-2265">
    <property type="entry name" value="TORC1 complex"/>
</dbReference>
<dbReference type="ComplexPortal" id="CPX-2269">
    <property type="entry name" value="TORC2 complex"/>
</dbReference>
<dbReference type="FunCoup" id="Q9VK45">
    <property type="interactions" value="1923"/>
</dbReference>
<dbReference type="IntAct" id="Q9VK45">
    <property type="interactions" value="18"/>
</dbReference>
<dbReference type="STRING" id="7227.FBpp0307598"/>
<dbReference type="PaxDb" id="7227-FBpp0080003"/>
<dbReference type="EnsemblMetazoa" id="FBtr0080422">
    <property type="protein sequence ID" value="FBpp0080003"/>
    <property type="gene ID" value="FBgn0021796"/>
</dbReference>
<dbReference type="GeneID" id="47396"/>
<dbReference type="KEGG" id="dme:Dmel_CG5092"/>
<dbReference type="UCSC" id="CG5092-RA">
    <property type="organism name" value="d. melanogaster"/>
</dbReference>
<dbReference type="AGR" id="FB:FBgn0021796"/>
<dbReference type="CTD" id="2475"/>
<dbReference type="FlyBase" id="FBgn0021796">
    <property type="gene designation" value="mTor"/>
</dbReference>
<dbReference type="VEuPathDB" id="VectorBase:FBgn0021796"/>
<dbReference type="eggNOG" id="KOG0891">
    <property type="taxonomic scope" value="Eukaryota"/>
</dbReference>
<dbReference type="GeneTree" id="ENSGT00930000151037"/>
<dbReference type="HOGENOM" id="CLU_000178_7_1_1"/>
<dbReference type="InParanoid" id="Q9VK45"/>
<dbReference type="OrthoDB" id="2250022at2759"/>
<dbReference type="PhylomeDB" id="Q9VK45"/>
<dbReference type="Reactome" id="R-DME-1257604">
    <property type="pathway name" value="PIP3 activates AKT signaling"/>
</dbReference>
<dbReference type="Reactome" id="R-DME-1632852">
    <property type="pathway name" value="Macroautophagy"/>
</dbReference>
<dbReference type="Reactome" id="R-DME-165159">
    <property type="pathway name" value="MTOR signalling"/>
</dbReference>
<dbReference type="Reactome" id="R-DME-166208">
    <property type="pathway name" value="mTORC1-mediated signalling"/>
</dbReference>
<dbReference type="Reactome" id="R-DME-3371571">
    <property type="pathway name" value="HSF1-dependent transactivation"/>
</dbReference>
<dbReference type="Reactome" id="R-DME-380972">
    <property type="pathway name" value="Energy dependent regulation of mTOR by LKB1-AMPK"/>
</dbReference>
<dbReference type="Reactome" id="R-DME-389357">
    <property type="pathway name" value="CD28 dependent PI3K/Akt signaling"/>
</dbReference>
<dbReference type="Reactome" id="R-DME-5218920">
    <property type="pathway name" value="VEGFR2 mediated vascular permeability"/>
</dbReference>
<dbReference type="Reactome" id="R-DME-5628897">
    <property type="pathway name" value="TP53 Regulates Metabolic Genes"/>
</dbReference>
<dbReference type="Reactome" id="R-DME-8943724">
    <property type="pathway name" value="Regulation of PTEN gene transcription"/>
</dbReference>
<dbReference type="Reactome" id="R-DME-9639288">
    <property type="pathway name" value="Amino acids regulate mTORC1"/>
</dbReference>
<dbReference type="Reactome" id="R-DME-9856530">
    <property type="pathway name" value="High laminar flow shear stress activates signaling by PIEZO1 and PECAM1:CDH5:KDR in endothelial cells"/>
</dbReference>
<dbReference type="SignaLink" id="Q9VK45"/>
<dbReference type="BioGRID-ORCS" id="47396">
    <property type="hits" value="2 hits in 3 CRISPR screens"/>
</dbReference>
<dbReference type="ChiTaRS" id="Egfr">
    <property type="organism name" value="fly"/>
</dbReference>
<dbReference type="GenomeRNAi" id="47396"/>
<dbReference type="PRO" id="PR:Q9VK45"/>
<dbReference type="Proteomes" id="UP000000803">
    <property type="component" value="Chromosome 2L"/>
</dbReference>
<dbReference type="Bgee" id="FBgn0021796">
    <property type="expression patterns" value="Expressed in eye disc (Drosophila) and 81 other cell types or tissues"/>
</dbReference>
<dbReference type="ExpressionAtlas" id="Q9VK45">
    <property type="expression patterns" value="baseline and differential"/>
</dbReference>
<dbReference type="GO" id="GO:0005737">
    <property type="term" value="C:cytoplasm"/>
    <property type="evidence" value="ECO:0007005"/>
    <property type="project" value="FlyBase"/>
</dbReference>
<dbReference type="GO" id="GO:0005634">
    <property type="term" value="C:nucleus"/>
    <property type="evidence" value="ECO:0000318"/>
    <property type="project" value="GO_Central"/>
</dbReference>
<dbReference type="GO" id="GO:0031931">
    <property type="term" value="C:TORC1 complex"/>
    <property type="evidence" value="ECO:0000315"/>
    <property type="project" value="UniProtKB"/>
</dbReference>
<dbReference type="GO" id="GO:0031932">
    <property type="term" value="C:TORC2 complex"/>
    <property type="evidence" value="ECO:0000314"/>
    <property type="project" value="UniProtKB"/>
</dbReference>
<dbReference type="GO" id="GO:0005524">
    <property type="term" value="F:ATP binding"/>
    <property type="evidence" value="ECO:0007669"/>
    <property type="project" value="UniProtKB-KW"/>
</dbReference>
<dbReference type="GO" id="GO:0031490">
    <property type="term" value="F:chromatin DNA binding"/>
    <property type="evidence" value="ECO:0000314"/>
    <property type="project" value="FlyBase"/>
</dbReference>
<dbReference type="GO" id="GO:0004672">
    <property type="term" value="F:protein kinase activity"/>
    <property type="evidence" value="ECO:0000314"/>
    <property type="project" value="FlyBase"/>
</dbReference>
<dbReference type="GO" id="GO:0106310">
    <property type="term" value="F:protein serine kinase activity"/>
    <property type="evidence" value="ECO:0007669"/>
    <property type="project" value="RHEA"/>
</dbReference>
<dbReference type="GO" id="GO:0004674">
    <property type="term" value="F:protein serine/threonine kinase activity"/>
    <property type="evidence" value="ECO:0000250"/>
    <property type="project" value="FlyBase"/>
</dbReference>
<dbReference type="GO" id="GO:0044877">
    <property type="term" value="F:protein-containing complex binding"/>
    <property type="evidence" value="ECO:0007669"/>
    <property type="project" value="InterPro"/>
</dbReference>
<dbReference type="GO" id="GO:0045176">
    <property type="term" value="P:apical protein localization"/>
    <property type="evidence" value="ECO:0000315"/>
    <property type="project" value="FlyBase"/>
</dbReference>
<dbReference type="GO" id="GO:0031670">
    <property type="term" value="P:cellular response to nutrient"/>
    <property type="evidence" value="ECO:0000314"/>
    <property type="project" value="FlyBase"/>
</dbReference>
<dbReference type="GO" id="GO:0048813">
    <property type="term" value="P:dendrite morphogenesis"/>
    <property type="evidence" value="ECO:0000315"/>
    <property type="project" value="FlyBase"/>
</dbReference>
<dbReference type="GO" id="GO:0008340">
    <property type="term" value="P:determination of adult lifespan"/>
    <property type="evidence" value="ECO:0000315"/>
    <property type="project" value="FlyBase"/>
</dbReference>
<dbReference type="GO" id="GO:0032456">
    <property type="term" value="P:endocytic recycling"/>
    <property type="evidence" value="ECO:0000314"/>
    <property type="project" value="FlyBase"/>
</dbReference>
<dbReference type="GO" id="GO:0048142">
    <property type="term" value="P:germarium-derived cystoblast division"/>
    <property type="evidence" value="ECO:0000315"/>
    <property type="project" value="FlyBase"/>
</dbReference>
<dbReference type="GO" id="GO:0051729">
    <property type="term" value="P:germline cell cycle switching, mitotic to meiotic cell cycle"/>
    <property type="evidence" value="ECO:0000315"/>
    <property type="project" value="UniProtKB"/>
</dbReference>
<dbReference type="GO" id="GO:0008406">
    <property type="term" value="P:gonad development"/>
    <property type="evidence" value="ECO:0000315"/>
    <property type="project" value="FlyBase"/>
</dbReference>
<dbReference type="GO" id="GO:0008286">
    <property type="term" value="P:insulin receptor signaling pathway"/>
    <property type="evidence" value="ECO:0000314"/>
    <property type="project" value="FlyBase"/>
</dbReference>
<dbReference type="GO" id="GO:0035171">
    <property type="term" value="P:lamellocyte differentiation"/>
    <property type="evidence" value="ECO:0000314"/>
    <property type="project" value="FlyBase"/>
</dbReference>
<dbReference type="GO" id="GO:0035096">
    <property type="term" value="P:larval midgut cell programmed cell death"/>
    <property type="evidence" value="ECO:0000315"/>
    <property type="project" value="FlyBase"/>
</dbReference>
<dbReference type="GO" id="GO:0016236">
    <property type="term" value="P:macroautophagy"/>
    <property type="evidence" value="ECO:0000315"/>
    <property type="project" value="FlyBase"/>
</dbReference>
<dbReference type="GO" id="GO:0035264">
    <property type="term" value="P:multicellular organism growth"/>
    <property type="evidence" value="ECO:0000315"/>
    <property type="project" value="FlyBase"/>
</dbReference>
<dbReference type="GO" id="GO:0043066">
    <property type="term" value="P:negative regulation of apoptotic process"/>
    <property type="evidence" value="ECO:0000315"/>
    <property type="project" value="FlyBase"/>
</dbReference>
<dbReference type="GO" id="GO:0016242">
    <property type="term" value="P:negative regulation of macroautophagy"/>
    <property type="evidence" value="ECO:0000315"/>
    <property type="project" value="FlyBase"/>
</dbReference>
<dbReference type="GO" id="GO:1901799">
    <property type="term" value="P:negative regulation of proteasomal protein catabolic process"/>
    <property type="evidence" value="ECO:0000314"/>
    <property type="project" value="FlyBase"/>
</dbReference>
<dbReference type="GO" id="GO:1902669">
    <property type="term" value="P:positive regulation of axon guidance"/>
    <property type="evidence" value="ECO:0000316"/>
    <property type="project" value="FlyBase"/>
</dbReference>
<dbReference type="GO" id="GO:0045793">
    <property type="term" value="P:positive regulation of cell size"/>
    <property type="evidence" value="ECO:0000315"/>
    <property type="project" value="FlyBase"/>
</dbReference>
<dbReference type="GO" id="GO:0046628">
    <property type="term" value="P:positive regulation of insulin receptor signaling pathway"/>
    <property type="evidence" value="ECO:0000315"/>
    <property type="project" value="FlyBase"/>
</dbReference>
<dbReference type="GO" id="GO:0051897">
    <property type="term" value="P:positive regulation of phosphatidylinositol 3-kinase/protein kinase B signal transduction"/>
    <property type="evidence" value="ECO:0000315"/>
    <property type="project" value="FlyBase"/>
</dbReference>
<dbReference type="GO" id="GO:0090070">
    <property type="term" value="P:positive regulation of ribosome biogenesis"/>
    <property type="evidence" value="ECO:0000315"/>
    <property type="project" value="FlyBase"/>
</dbReference>
<dbReference type="GO" id="GO:0045887">
    <property type="term" value="P:positive regulation of synaptic assembly at neuromuscular junction"/>
    <property type="evidence" value="ECO:0000316"/>
    <property type="project" value="FlyBase"/>
</dbReference>
<dbReference type="GO" id="GO:0045945">
    <property type="term" value="P:positive regulation of transcription by RNA polymerase III"/>
    <property type="evidence" value="ECO:0000315"/>
    <property type="project" value="FlyBase"/>
</dbReference>
<dbReference type="GO" id="GO:0090303">
    <property type="term" value="P:positive regulation of wound healing"/>
    <property type="evidence" value="ECO:0000315"/>
    <property type="project" value="FlyBase"/>
</dbReference>
<dbReference type="GO" id="GO:0001558">
    <property type="term" value="P:regulation of cell growth"/>
    <property type="evidence" value="ECO:0000314"/>
    <property type="project" value="FlyBase"/>
</dbReference>
<dbReference type="GO" id="GO:2001023">
    <property type="term" value="P:regulation of response to drug"/>
    <property type="evidence" value="ECO:0000315"/>
    <property type="project" value="FlyBase"/>
</dbReference>
<dbReference type="GO" id="GO:0007430">
    <property type="term" value="P:terminal branching, open tracheal system"/>
    <property type="evidence" value="ECO:0000315"/>
    <property type="project" value="FlyBase"/>
</dbReference>
<dbReference type="GO" id="GO:0038202">
    <property type="term" value="P:TORC1 signaling"/>
    <property type="evidence" value="ECO:0000315"/>
    <property type="project" value="UniProtKB"/>
</dbReference>
<dbReference type="GO" id="GO:0048010">
    <property type="term" value="P:vascular endothelial growth factor receptor signaling pathway"/>
    <property type="evidence" value="ECO:0000315"/>
    <property type="project" value="FlyBase"/>
</dbReference>
<dbReference type="CDD" id="cd05169">
    <property type="entry name" value="PIKKc_TOR"/>
    <property type="match status" value="1"/>
</dbReference>
<dbReference type="FunFam" id="1.25.10.10:FF:000060">
    <property type="entry name" value="Serine/threonine-protein kinase mTOR"/>
    <property type="match status" value="1"/>
</dbReference>
<dbReference type="FunFam" id="1.25.10.10:FF:000094">
    <property type="entry name" value="Serine/threonine-protein kinase mTOR"/>
    <property type="match status" value="1"/>
</dbReference>
<dbReference type="FunFam" id="1.10.1070.11:FF:000007">
    <property type="entry name" value="Serine/threonine-protein kinase TOR"/>
    <property type="match status" value="1"/>
</dbReference>
<dbReference type="FunFam" id="1.20.120.150:FF:000001">
    <property type="entry name" value="Serine/threonine-protein kinase TOR"/>
    <property type="match status" value="1"/>
</dbReference>
<dbReference type="FunFam" id="1.25.10.10:FF:001447">
    <property type="entry name" value="Serine/threonine-protein kinase TOR"/>
    <property type="match status" value="1"/>
</dbReference>
<dbReference type="FunFam" id="3.30.1010.10:FF:000004">
    <property type="entry name" value="Serine/threonine-protein kinase TOR"/>
    <property type="match status" value="1"/>
</dbReference>
<dbReference type="Gene3D" id="1.20.120.150">
    <property type="entry name" value="FKBP12-rapamycin binding domain"/>
    <property type="match status" value="1"/>
</dbReference>
<dbReference type="Gene3D" id="1.25.10.10">
    <property type="entry name" value="Leucine-rich Repeat Variant"/>
    <property type="match status" value="4"/>
</dbReference>
<dbReference type="Gene3D" id="1.10.1070.11">
    <property type="entry name" value="Phosphatidylinositol 3-/4-kinase, catalytic domain"/>
    <property type="match status" value="1"/>
</dbReference>
<dbReference type="Gene3D" id="3.30.1010.10">
    <property type="entry name" value="Phosphatidylinositol 3-kinase Catalytic Subunit, Chain A, domain 4"/>
    <property type="match status" value="1"/>
</dbReference>
<dbReference type="Gene3D" id="1.25.40.10">
    <property type="entry name" value="Tetratricopeptide repeat domain"/>
    <property type="match status" value="2"/>
</dbReference>
<dbReference type="InterPro" id="IPR011989">
    <property type="entry name" value="ARM-like"/>
</dbReference>
<dbReference type="InterPro" id="IPR016024">
    <property type="entry name" value="ARM-type_fold"/>
</dbReference>
<dbReference type="InterPro" id="IPR050517">
    <property type="entry name" value="DDR_Repair_Kinase"/>
</dbReference>
<dbReference type="InterPro" id="IPR003152">
    <property type="entry name" value="FATC_dom"/>
</dbReference>
<dbReference type="InterPro" id="IPR009076">
    <property type="entry name" value="FRB_dom"/>
</dbReference>
<dbReference type="InterPro" id="IPR036738">
    <property type="entry name" value="FRB_sf"/>
</dbReference>
<dbReference type="InterPro" id="IPR011009">
    <property type="entry name" value="Kinase-like_dom_sf"/>
</dbReference>
<dbReference type="InterPro" id="IPR024585">
    <property type="entry name" value="mTOR_dom"/>
</dbReference>
<dbReference type="InterPro" id="IPR000403">
    <property type="entry name" value="PI3/4_kinase_cat_dom"/>
</dbReference>
<dbReference type="InterPro" id="IPR036940">
    <property type="entry name" value="PI3/4_kinase_cat_sf"/>
</dbReference>
<dbReference type="InterPro" id="IPR018936">
    <property type="entry name" value="PI3/4_kinase_CS"/>
</dbReference>
<dbReference type="InterPro" id="IPR003151">
    <property type="entry name" value="PIK-rel_kinase_FAT"/>
</dbReference>
<dbReference type="InterPro" id="IPR014009">
    <property type="entry name" value="PIK_FAT"/>
</dbReference>
<dbReference type="InterPro" id="IPR026683">
    <property type="entry name" value="TOR_cat"/>
</dbReference>
<dbReference type="InterPro" id="IPR011990">
    <property type="entry name" value="TPR-like_helical_dom_sf"/>
</dbReference>
<dbReference type="InterPro" id="IPR019734">
    <property type="entry name" value="TPR_rpt"/>
</dbReference>
<dbReference type="PANTHER" id="PTHR11139">
    <property type="entry name" value="ATAXIA TELANGIECTASIA MUTATED ATM -RELATED"/>
    <property type="match status" value="1"/>
</dbReference>
<dbReference type="PANTHER" id="PTHR11139:SF9">
    <property type="entry name" value="SERINE_THREONINE-PROTEIN KINASE MTOR"/>
    <property type="match status" value="1"/>
</dbReference>
<dbReference type="Pfam" id="PF02259">
    <property type="entry name" value="FAT"/>
    <property type="match status" value="1"/>
</dbReference>
<dbReference type="Pfam" id="PF02260">
    <property type="entry name" value="FATC"/>
    <property type="match status" value="1"/>
</dbReference>
<dbReference type="Pfam" id="PF08771">
    <property type="entry name" value="FRB_dom"/>
    <property type="match status" value="1"/>
</dbReference>
<dbReference type="Pfam" id="PF23593">
    <property type="entry name" value="HEAT_ATR"/>
    <property type="match status" value="1"/>
</dbReference>
<dbReference type="Pfam" id="PF11865">
    <property type="entry name" value="mTOR_dom"/>
    <property type="match status" value="1"/>
</dbReference>
<dbReference type="Pfam" id="PF00454">
    <property type="entry name" value="PI3_PI4_kinase"/>
    <property type="match status" value="1"/>
</dbReference>
<dbReference type="SMART" id="SM01346">
    <property type="entry name" value="DUF3385"/>
    <property type="match status" value="1"/>
</dbReference>
<dbReference type="SMART" id="SM01343">
    <property type="entry name" value="FATC"/>
    <property type="match status" value="1"/>
</dbReference>
<dbReference type="SMART" id="SM00146">
    <property type="entry name" value="PI3Kc"/>
    <property type="match status" value="1"/>
</dbReference>
<dbReference type="SMART" id="SM01345">
    <property type="entry name" value="Rapamycin_bind"/>
    <property type="match status" value="1"/>
</dbReference>
<dbReference type="SUPFAM" id="SSF48371">
    <property type="entry name" value="ARM repeat"/>
    <property type="match status" value="2"/>
</dbReference>
<dbReference type="SUPFAM" id="SSF47212">
    <property type="entry name" value="FKBP12-rapamycin-binding domain of FKBP-rapamycin-associated protein (FRAP)"/>
    <property type="match status" value="1"/>
</dbReference>
<dbReference type="SUPFAM" id="SSF56112">
    <property type="entry name" value="Protein kinase-like (PK-like)"/>
    <property type="match status" value="1"/>
</dbReference>
<dbReference type="PROSITE" id="PS51189">
    <property type="entry name" value="FAT"/>
    <property type="match status" value="1"/>
</dbReference>
<dbReference type="PROSITE" id="PS51190">
    <property type="entry name" value="FATC"/>
    <property type="match status" value="1"/>
</dbReference>
<dbReference type="PROSITE" id="PS00915">
    <property type="entry name" value="PI3_4_KINASE_1"/>
    <property type="match status" value="1"/>
</dbReference>
<dbReference type="PROSITE" id="PS00916">
    <property type="entry name" value="PI3_4_KINASE_2"/>
    <property type="match status" value="1"/>
</dbReference>
<dbReference type="PROSITE" id="PS50290">
    <property type="entry name" value="PI3_4_KINASE_3"/>
    <property type="match status" value="1"/>
</dbReference>
<dbReference type="PROSITE" id="PS50005">
    <property type="entry name" value="TPR"/>
    <property type="match status" value="2"/>
</dbReference>
<dbReference type="PROSITE" id="PS50293">
    <property type="entry name" value="TPR_REGION"/>
    <property type="match status" value="1"/>
</dbReference>
<organism>
    <name type="scientific">Drosophila melanogaster</name>
    <name type="common">Fruit fly</name>
    <dbReference type="NCBI Taxonomy" id="7227"/>
    <lineage>
        <taxon>Eukaryota</taxon>
        <taxon>Metazoa</taxon>
        <taxon>Ecdysozoa</taxon>
        <taxon>Arthropoda</taxon>
        <taxon>Hexapoda</taxon>
        <taxon>Insecta</taxon>
        <taxon>Pterygota</taxon>
        <taxon>Neoptera</taxon>
        <taxon>Endopterygota</taxon>
        <taxon>Diptera</taxon>
        <taxon>Brachycera</taxon>
        <taxon>Muscomorpha</taxon>
        <taxon>Ephydroidea</taxon>
        <taxon>Drosophilidae</taxon>
        <taxon>Drosophila</taxon>
        <taxon>Sophophora</taxon>
    </lineage>
</organism>
<keyword id="KW-0067">ATP-binding</keyword>
<keyword id="KW-0131">Cell cycle</keyword>
<keyword id="KW-0418">Kinase</keyword>
<keyword id="KW-0547">Nucleotide-binding</keyword>
<keyword id="KW-1185">Reference proteome</keyword>
<keyword id="KW-0677">Repeat</keyword>
<keyword id="KW-0802">TPR repeat</keyword>
<keyword id="KW-0808">Transferase</keyword>
<name>TOR_DROME</name>
<gene>
    <name evidence="17 19" type="primary">mTor</name>
    <name evidence="17" type="synonym">Tor</name>
    <name evidence="19" type="ORF">CG5092</name>
</gene>
<reference key="1">
    <citation type="journal article" date="2000" name="Science">
        <title>The genome sequence of Drosophila melanogaster.</title>
        <authorList>
            <person name="Adams M.D."/>
            <person name="Celniker S.E."/>
            <person name="Holt R.A."/>
            <person name="Evans C.A."/>
            <person name="Gocayne J.D."/>
            <person name="Amanatides P.G."/>
            <person name="Scherer S.E."/>
            <person name="Li P.W."/>
            <person name="Hoskins R.A."/>
            <person name="Galle R.F."/>
            <person name="George R.A."/>
            <person name="Lewis S.E."/>
            <person name="Richards S."/>
            <person name="Ashburner M."/>
            <person name="Henderson S.N."/>
            <person name="Sutton G.G."/>
            <person name="Wortman J.R."/>
            <person name="Yandell M.D."/>
            <person name="Zhang Q."/>
            <person name="Chen L.X."/>
            <person name="Brandon R.C."/>
            <person name="Rogers Y.-H.C."/>
            <person name="Blazej R.G."/>
            <person name="Champe M."/>
            <person name="Pfeiffer B.D."/>
            <person name="Wan K.H."/>
            <person name="Doyle C."/>
            <person name="Baxter E.G."/>
            <person name="Helt G."/>
            <person name="Nelson C.R."/>
            <person name="Miklos G.L.G."/>
            <person name="Abril J.F."/>
            <person name="Agbayani A."/>
            <person name="An H.-J."/>
            <person name="Andrews-Pfannkoch C."/>
            <person name="Baldwin D."/>
            <person name="Ballew R.M."/>
            <person name="Basu A."/>
            <person name="Baxendale J."/>
            <person name="Bayraktaroglu L."/>
            <person name="Beasley E.M."/>
            <person name="Beeson K.Y."/>
            <person name="Benos P.V."/>
            <person name="Berman B.P."/>
            <person name="Bhandari D."/>
            <person name="Bolshakov S."/>
            <person name="Borkova D."/>
            <person name="Botchan M.R."/>
            <person name="Bouck J."/>
            <person name="Brokstein P."/>
            <person name="Brottier P."/>
            <person name="Burtis K.C."/>
            <person name="Busam D.A."/>
            <person name="Butler H."/>
            <person name="Cadieu E."/>
            <person name="Center A."/>
            <person name="Chandra I."/>
            <person name="Cherry J.M."/>
            <person name="Cawley S."/>
            <person name="Dahlke C."/>
            <person name="Davenport L.B."/>
            <person name="Davies P."/>
            <person name="de Pablos B."/>
            <person name="Delcher A."/>
            <person name="Deng Z."/>
            <person name="Mays A.D."/>
            <person name="Dew I."/>
            <person name="Dietz S.M."/>
            <person name="Dodson K."/>
            <person name="Doup L.E."/>
            <person name="Downes M."/>
            <person name="Dugan-Rocha S."/>
            <person name="Dunkov B.C."/>
            <person name="Dunn P."/>
            <person name="Durbin K.J."/>
            <person name="Evangelista C.C."/>
            <person name="Ferraz C."/>
            <person name="Ferriera S."/>
            <person name="Fleischmann W."/>
            <person name="Fosler C."/>
            <person name="Gabrielian A.E."/>
            <person name="Garg N.S."/>
            <person name="Gelbart W.M."/>
            <person name="Glasser K."/>
            <person name="Glodek A."/>
            <person name="Gong F."/>
            <person name="Gorrell J.H."/>
            <person name="Gu Z."/>
            <person name="Guan P."/>
            <person name="Harris M."/>
            <person name="Harris N.L."/>
            <person name="Harvey D.A."/>
            <person name="Heiman T.J."/>
            <person name="Hernandez J.R."/>
            <person name="Houck J."/>
            <person name="Hostin D."/>
            <person name="Houston K.A."/>
            <person name="Howland T.J."/>
            <person name="Wei M.-H."/>
            <person name="Ibegwam C."/>
            <person name="Jalali M."/>
            <person name="Kalush F."/>
            <person name="Karpen G.H."/>
            <person name="Ke Z."/>
            <person name="Kennison J.A."/>
            <person name="Ketchum K.A."/>
            <person name="Kimmel B.E."/>
            <person name="Kodira C.D."/>
            <person name="Kraft C.L."/>
            <person name="Kravitz S."/>
            <person name="Kulp D."/>
            <person name="Lai Z."/>
            <person name="Lasko P."/>
            <person name="Lei Y."/>
            <person name="Levitsky A.A."/>
            <person name="Li J.H."/>
            <person name="Li Z."/>
            <person name="Liang Y."/>
            <person name="Lin X."/>
            <person name="Liu X."/>
            <person name="Mattei B."/>
            <person name="McIntosh T.C."/>
            <person name="McLeod M.P."/>
            <person name="McPherson D."/>
            <person name="Merkulov G."/>
            <person name="Milshina N.V."/>
            <person name="Mobarry C."/>
            <person name="Morris J."/>
            <person name="Moshrefi A."/>
            <person name="Mount S.M."/>
            <person name="Moy M."/>
            <person name="Murphy B."/>
            <person name="Murphy L."/>
            <person name="Muzny D.M."/>
            <person name="Nelson D.L."/>
            <person name="Nelson D.R."/>
            <person name="Nelson K.A."/>
            <person name="Nixon K."/>
            <person name="Nusskern D.R."/>
            <person name="Pacleb J.M."/>
            <person name="Palazzolo M."/>
            <person name="Pittman G.S."/>
            <person name="Pan S."/>
            <person name="Pollard J."/>
            <person name="Puri V."/>
            <person name="Reese M.G."/>
            <person name="Reinert K."/>
            <person name="Remington K."/>
            <person name="Saunders R.D.C."/>
            <person name="Scheeler F."/>
            <person name="Shen H."/>
            <person name="Shue B.C."/>
            <person name="Siden-Kiamos I."/>
            <person name="Simpson M."/>
            <person name="Skupski M.P."/>
            <person name="Smith T.J."/>
            <person name="Spier E."/>
            <person name="Spradling A.C."/>
            <person name="Stapleton M."/>
            <person name="Strong R."/>
            <person name="Sun E."/>
            <person name="Svirskas R."/>
            <person name="Tector C."/>
            <person name="Turner R."/>
            <person name="Venter E."/>
            <person name="Wang A.H."/>
            <person name="Wang X."/>
            <person name="Wang Z.-Y."/>
            <person name="Wassarman D.A."/>
            <person name="Weinstock G.M."/>
            <person name="Weissenbach J."/>
            <person name="Williams S.M."/>
            <person name="Woodage T."/>
            <person name="Worley K.C."/>
            <person name="Wu D."/>
            <person name="Yang S."/>
            <person name="Yao Q.A."/>
            <person name="Ye J."/>
            <person name="Yeh R.-F."/>
            <person name="Zaveri J.S."/>
            <person name="Zhan M."/>
            <person name="Zhang G."/>
            <person name="Zhao Q."/>
            <person name="Zheng L."/>
            <person name="Zheng X.H."/>
            <person name="Zhong F.N."/>
            <person name="Zhong W."/>
            <person name="Zhou X."/>
            <person name="Zhu S.C."/>
            <person name="Zhu X."/>
            <person name="Smith H.O."/>
            <person name="Gibbs R.A."/>
            <person name="Myers E.W."/>
            <person name="Rubin G.M."/>
            <person name="Venter J.C."/>
        </authorList>
    </citation>
    <scope>NUCLEOTIDE SEQUENCE [LARGE SCALE GENOMIC DNA]</scope>
    <source>
        <strain>Berkeley</strain>
    </source>
</reference>
<reference key="2">
    <citation type="journal article" date="2002" name="Genome Biol.">
        <title>Annotation of the Drosophila melanogaster euchromatic genome: a systematic review.</title>
        <authorList>
            <person name="Misra S."/>
            <person name="Crosby M.A."/>
            <person name="Mungall C.J."/>
            <person name="Matthews B.B."/>
            <person name="Campbell K.S."/>
            <person name="Hradecky P."/>
            <person name="Huang Y."/>
            <person name="Kaminker J.S."/>
            <person name="Millburn G.H."/>
            <person name="Prochnik S.E."/>
            <person name="Smith C.D."/>
            <person name="Tupy J.L."/>
            <person name="Whitfield E.J."/>
            <person name="Bayraktaroglu L."/>
            <person name="Berman B.P."/>
            <person name="Bettencourt B.R."/>
            <person name="Celniker S.E."/>
            <person name="de Grey A.D.N.J."/>
            <person name="Drysdale R.A."/>
            <person name="Harris N.L."/>
            <person name="Richter J."/>
            <person name="Russo S."/>
            <person name="Schroeder A.J."/>
            <person name="Shu S.Q."/>
            <person name="Stapleton M."/>
            <person name="Yamada C."/>
            <person name="Ashburner M."/>
            <person name="Gelbart W.M."/>
            <person name="Rubin G.M."/>
            <person name="Lewis S.E."/>
        </authorList>
    </citation>
    <scope>GENOME REANNOTATION</scope>
    <source>
        <strain>Berkeley</strain>
    </source>
</reference>
<reference key="3">
    <citation type="journal article" date="2000" name="Genes Dev.">
        <title>Genetic and biochemical characterization of dTOR, the Drosophila homolog of the target of rapamycin.</title>
        <authorList>
            <person name="Oldham S."/>
            <person name="Montagne J."/>
            <person name="Radimerski T."/>
            <person name="Thomas G."/>
            <person name="Hafen E."/>
        </authorList>
    </citation>
    <scope>FUNCTION</scope>
    <scope>DISRUPTION PHENOTYPE</scope>
    <scope>MUTAGENESIS OF SER-1956</scope>
</reference>
<reference key="4">
    <citation type="journal article" date="2000" name="Genes Dev.">
        <title>Regulation of cellular growth by the Drosophila target of rapamycin dTOR.</title>
        <authorList>
            <person name="Zhang H."/>
            <person name="Stallock J.P."/>
            <person name="Ng J.C."/>
            <person name="Reinhard C."/>
            <person name="Neufeld T.P."/>
        </authorList>
    </citation>
    <scope>FUNCTION</scope>
    <scope>DISRUPTION PHENOTYPE</scope>
</reference>
<reference key="5">
    <citation type="journal article" date="2003" name="Cell">
        <title>A nutrient sensor mechanism controls Drosophila growth.</title>
        <authorList>
            <person name="Colombani J."/>
            <person name="Raisin S."/>
            <person name="Pantalacci S."/>
            <person name="Radimerski T."/>
            <person name="Montagne J."/>
            <person name="Leopold P."/>
        </authorList>
    </citation>
    <scope>FUNCTION</scope>
</reference>
<reference key="6">
    <citation type="journal article" date="2003" name="Trends Cell Biol.">
        <title>Insulin/IGF and target of rapamycin signaling: a TOR de force in growth control.</title>
        <authorList>
            <person name="Oldham S."/>
            <person name="Hafen E."/>
        </authorList>
    </citation>
    <scope>REVIEW</scope>
</reference>
<reference key="7">
    <citation type="journal article" date="2004" name="Cell">
        <title>Temporal control of differentiation by the insulin receptor/tor pathway in Drosophila.</title>
        <authorList>
            <person name="Bateman J.M."/>
            <person name="McNeill H."/>
        </authorList>
    </citation>
    <scope>FUNCTION</scope>
</reference>
<reference key="8">
    <citation type="journal article" date="2006" name="Cell">
        <title>TOR signaling in growth and metabolism.</title>
        <authorList>
            <person name="Wullschleger S."/>
            <person name="Loewith R."/>
            <person name="Hall M.N."/>
        </authorList>
    </citation>
    <scope>REVIEW</scope>
</reference>
<reference key="9">
    <citation type="journal article" date="2006" name="Genetics">
        <title>Drosophila target of rapamycin kinase functions as a multimer.</title>
        <authorList>
            <person name="Zhang Y."/>
            <person name="Billington C.J. Jr."/>
            <person name="Pan D."/>
            <person name="Neufeld T.P."/>
        </authorList>
    </citation>
    <scope>SUBUNIT</scope>
</reference>
<reference key="10">
    <citation type="journal article" date="2008" name="Nat. Cell Biol.">
        <title>Regulation of TORC1 by Rag GTPases in nutrient response.</title>
        <authorList>
            <person name="Kim E."/>
            <person name="Goraksha-Hicks P."/>
            <person name="Li L."/>
            <person name="Neufeld T.P."/>
            <person name="Guan K.L."/>
        </authorList>
    </citation>
    <scope>FUNCTION</scope>
</reference>
<reference key="11">
    <citation type="journal article" date="2009" name="Development">
        <title>Integration of Insulin receptor/Foxo signaling and dMyc activity during muscle growth regulates body size in Drosophila.</title>
        <authorList>
            <person name="Demontis F."/>
            <person name="Perrimon N."/>
        </authorList>
    </citation>
    <scope>FUNCTION</scope>
    <scope>INDUCTION</scope>
</reference>
<reference key="12">
    <citation type="journal article" date="2009" name="Int. J. Biochem. Cell Biol.">
        <title>Insulin/TOR signaling in growth and homeostasis: a view from the fly world.</title>
        <authorList>
            <person name="Grewal S.S."/>
        </authorList>
    </citation>
    <scope>REVIEW</scope>
</reference>
<reference key="13">
    <citation type="journal article" date="2009" name="Mol. Biol. Cell">
        <title>An Atg1/Atg13 complex with multiple roles in TOR-mediated autophagy regulation.</title>
        <authorList>
            <person name="Chang Y.Y."/>
            <person name="Neufeld T.P."/>
        </authorList>
    </citation>
    <scope>FUNCTION</scope>
</reference>
<reference key="14">
    <citation type="journal article" date="2015" name="Dev. Cell">
        <title>REPTOR and REPTOR-BP regulate organismal metabolism and transcription downstream of TORC1.</title>
        <authorList>
            <person name="Tiebe M."/>
            <person name="Lutz M."/>
            <person name="De La Garza A."/>
            <person name="Buechling T."/>
            <person name="Boutros M."/>
            <person name="Teleman A.A."/>
        </authorList>
    </citation>
    <scope>FUNCTION</scope>
</reference>
<evidence type="ECO:0000250" key="1"/>
<evidence type="ECO:0000255" key="2"/>
<evidence type="ECO:0000255" key="3">
    <source>
        <dbReference type="PROSITE-ProRule" id="PRU00269"/>
    </source>
</evidence>
<evidence type="ECO:0000255" key="4">
    <source>
        <dbReference type="PROSITE-ProRule" id="PRU00339"/>
    </source>
</evidence>
<evidence type="ECO:0000255" key="5">
    <source>
        <dbReference type="PROSITE-ProRule" id="PRU00534"/>
    </source>
</evidence>
<evidence type="ECO:0000255" key="6">
    <source>
        <dbReference type="PROSITE-ProRule" id="PRU00535"/>
    </source>
</evidence>
<evidence type="ECO:0000256" key="7">
    <source>
        <dbReference type="SAM" id="MobiDB-lite"/>
    </source>
</evidence>
<evidence type="ECO:0000269" key="8">
    <source>
    </source>
</evidence>
<evidence type="ECO:0000269" key="9">
    <source>
    </source>
</evidence>
<evidence type="ECO:0000269" key="10">
    <source>
    </source>
</evidence>
<evidence type="ECO:0000269" key="11">
    <source>
    </source>
</evidence>
<evidence type="ECO:0000269" key="12">
    <source>
    </source>
</evidence>
<evidence type="ECO:0000269" key="13">
    <source>
    </source>
</evidence>
<evidence type="ECO:0000269" key="14">
    <source>
    </source>
</evidence>
<evidence type="ECO:0000269" key="15">
    <source>
    </source>
</evidence>
<evidence type="ECO:0000269" key="16">
    <source>
    </source>
</evidence>
<evidence type="ECO:0000303" key="17">
    <source>
    </source>
</evidence>
<evidence type="ECO:0000305" key="18"/>
<evidence type="ECO:0000312" key="19">
    <source>
        <dbReference type="FlyBase" id="FBgn0021796"/>
    </source>
</evidence>
<proteinExistence type="evidence at protein level"/>